<accession>A0QHY0</accession>
<comment type="function">
    <text evidence="1">Forms oxaloacetate, a four-carbon dicarboxylic acid source for the tricarboxylic acid cycle.</text>
</comment>
<comment type="catalytic activity">
    <reaction evidence="1">
        <text>oxaloacetate + phosphate = phosphoenolpyruvate + hydrogencarbonate</text>
        <dbReference type="Rhea" id="RHEA:28370"/>
        <dbReference type="ChEBI" id="CHEBI:16452"/>
        <dbReference type="ChEBI" id="CHEBI:17544"/>
        <dbReference type="ChEBI" id="CHEBI:43474"/>
        <dbReference type="ChEBI" id="CHEBI:58702"/>
        <dbReference type="EC" id="4.1.1.31"/>
    </reaction>
</comment>
<comment type="cofactor">
    <cofactor evidence="1">
        <name>Mg(2+)</name>
        <dbReference type="ChEBI" id="CHEBI:18420"/>
    </cofactor>
</comment>
<comment type="similarity">
    <text evidence="1">Belongs to the PEPCase type 1 family.</text>
</comment>
<organism>
    <name type="scientific">Mycobacterium avium (strain 104)</name>
    <dbReference type="NCBI Taxonomy" id="243243"/>
    <lineage>
        <taxon>Bacteria</taxon>
        <taxon>Bacillati</taxon>
        <taxon>Actinomycetota</taxon>
        <taxon>Actinomycetes</taxon>
        <taxon>Mycobacteriales</taxon>
        <taxon>Mycobacteriaceae</taxon>
        <taxon>Mycobacterium</taxon>
        <taxon>Mycobacterium avium complex (MAC)</taxon>
    </lineage>
</organism>
<keyword id="KW-0120">Carbon dioxide fixation</keyword>
<keyword id="KW-0456">Lyase</keyword>
<keyword id="KW-0460">Magnesium</keyword>
<proteinExistence type="inferred from homology"/>
<name>CAPP_MYCA1</name>
<reference key="1">
    <citation type="submission" date="2006-10" db="EMBL/GenBank/DDBJ databases">
        <authorList>
            <person name="Fleischmann R.D."/>
            <person name="Dodson R.J."/>
            <person name="Haft D.H."/>
            <person name="Merkel J.S."/>
            <person name="Nelson W.C."/>
            <person name="Fraser C.M."/>
        </authorList>
    </citation>
    <scope>NUCLEOTIDE SEQUENCE [LARGE SCALE GENOMIC DNA]</scope>
    <source>
        <strain>104</strain>
    </source>
</reference>
<feature type="chain" id="PRO_1000025565" description="Phosphoenolpyruvate carboxylase">
    <location>
        <begin position="1"/>
        <end position="935"/>
    </location>
</feature>
<feature type="active site" evidence="1">
    <location>
        <position position="161"/>
    </location>
</feature>
<feature type="active site" evidence="1">
    <location>
        <position position="593"/>
    </location>
</feature>
<gene>
    <name evidence="1" type="primary">ppc</name>
    <name type="ordered locus">MAV_3336</name>
</gene>
<protein>
    <recommendedName>
        <fullName evidence="1">Phosphoenolpyruvate carboxylase</fullName>
        <shortName evidence="1">PEPC</shortName>
        <shortName evidence="1">PEPCase</shortName>
        <ecNumber evidence="1">4.1.1.31</ecNumber>
    </recommendedName>
</protein>
<dbReference type="EC" id="4.1.1.31" evidence="1"/>
<dbReference type="EMBL" id="CP000479">
    <property type="protein sequence ID" value="ABK67960.1"/>
    <property type="molecule type" value="Genomic_DNA"/>
</dbReference>
<dbReference type="RefSeq" id="WP_011725407.1">
    <property type="nucleotide sequence ID" value="NC_008595.1"/>
</dbReference>
<dbReference type="SMR" id="A0QHY0"/>
<dbReference type="KEGG" id="mav:MAV_3336"/>
<dbReference type="HOGENOM" id="CLU_006557_2_0_11"/>
<dbReference type="Proteomes" id="UP000001574">
    <property type="component" value="Chromosome"/>
</dbReference>
<dbReference type="GO" id="GO:0005829">
    <property type="term" value="C:cytosol"/>
    <property type="evidence" value="ECO:0007669"/>
    <property type="project" value="TreeGrafter"/>
</dbReference>
<dbReference type="GO" id="GO:0000287">
    <property type="term" value="F:magnesium ion binding"/>
    <property type="evidence" value="ECO:0007669"/>
    <property type="project" value="UniProtKB-UniRule"/>
</dbReference>
<dbReference type="GO" id="GO:0008964">
    <property type="term" value="F:phosphoenolpyruvate carboxylase activity"/>
    <property type="evidence" value="ECO:0007669"/>
    <property type="project" value="UniProtKB-UniRule"/>
</dbReference>
<dbReference type="GO" id="GO:0015977">
    <property type="term" value="P:carbon fixation"/>
    <property type="evidence" value="ECO:0007669"/>
    <property type="project" value="UniProtKB-UniRule"/>
</dbReference>
<dbReference type="GO" id="GO:0006107">
    <property type="term" value="P:oxaloacetate metabolic process"/>
    <property type="evidence" value="ECO:0007669"/>
    <property type="project" value="UniProtKB-UniRule"/>
</dbReference>
<dbReference type="GO" id="GO:0006099">
    <property type="term" value="P:tricarboxylic acid cycle"/>
    <property type="evidence" value="ECO:0007669"/>
    <property type="project" value="InterPro"/>
</dbReference>
<dbReference type="Gene3D" id="1.20.1440.90">
    <property type="entry name" value="Phosphoenolpyruvate/pyruvate domain"/>
    <property type="match status" value="1"/>
</dbReference>
<dbReference type="HAMAP" id="MF_00595">
    <property type="entry name" value="PEPcase_type1"/>
    <property type="match status" value="1"/>
</dbReference>
<dbReference type="InterPro" id="IPR021135">
    <property type="entry name" value="PEP_COase"/>
</dbReference>
<dbReference type="InterPro" id="IPR022805">
    <property type="entry name" value="PEP_COase_bac/pln-type"/>
</dbReference>
<dbReference type="InterPro" id="IPR018129">
    <property type="entry name" value="PEP_COase_Lys_AS"/>
</dbReference>
<dbReference type="InterPro" id="IPR033129">
    <property type="entry name" value="PEPCASE_His_AS"/>
</dbReference>
<dbReference type="InterPro" id="IPR015813">
    <property type="entry name" value="Pyrv/PenolPyrv_kinase-like_dom"/>
</dbReference>
<dbReference type="NCBIfam" id="NF000584">
    <property type="entry name" value="PRK00009.1"/>
    <property type="match status" value="1"/>
</dbReference>
<dbReference type="PANTHER" id="PTHR30523">
    <property type="entry name" value="PHOSPHOENOLPYRUVATE CARBOXYLASE"/>
    <property type="match status" value="1"/>
</dbReference>
<dbReference type="PANTHER" id="PTHR30523:SF6">
    <property type="entry name" value="PHOSPHOENOLPYRUVATE CARBOXYLASE"/>
    <property type="match status" value="1"/>
</dbReference>
<dbReference type="Pfam" id="PF00311">
    <property type="entry name" value="PEPcase"/>
    <property type="match status" value="1"/>
</dbReference>
<dbReference type="PRINTS" id="PR00150">
    <property type="entry name" value="PEPCARBXLASE"/>
</dbReference>
<dbReference type="SUPFAM" id="SSF51621">
    <property type="entry name" value="Phosphoenolpyruvate/pyruvate domain"/>
    <property type="match status" value="1"/>
</dbReference>
<dbReference type="PROSITE" id="PS00781">
    <property type="entry name" value="PEPCASE_1"/>
    <property type="match status" value="1"/>
</dbReference>
<dbReference type="PROSITE" id="PS00393">
    <property type="entry name" value="PEPCASE_2"/>
    <property type="match status" value="1"/>
</dbReference>
<evidence type="ECO:0000255" key="1">
    <source>
        <dbReference type="HAMAP-Rule" id="MF_00595"/>
    </source>
</evidence>
<sequence length="935" mass="102548">MVEASEGTLEPIGAVQRTLVGREATEPMRADIGLLGAILGDTVREQNGQQVFELVERARVESFRVRRSEIDRAELARMFAGIDIHQAIPVIRAFSHFALLANVAEDIHRERRRAIHVAAGEPPQDSSLAATYAKLDRAQLDSATVAEALRGAVVSPVITAHPTETRRRTVFVTQHRITELMRLHAEGHIETDDGRNIELELRRQVLTLWQTALIRLSRLQITDEIEVGLRYYAAAFFKVIPRVNAEVRNALRARWPGADLLDEPIVAPGSWIGGDRDGNPNVTADVVRRATGDAAYTALAHYLAELTACEQELSMSARLVAVTPELAALAEDCAEKARADEPYRRALRVIRGRLTATAAEILDRRPQHELDLGLPPYATPAELRGDLDTVDASLRAHGSALLADDRLALLREGVRVFGFHLCGLDMRQNSDVHEEVVAELLAWAGVHPDYRSLPEDERVELLAAELGTRRPLVGDRAELSELADKELGVVRAAAHAIRRYGPAAVPNYVISMCRSVSDVLEAAILLKEAGLIDASGPEPYCPVGISPLFETIEDLHNGAAILHAMLELPLYRALVAARGQSQEVMLGYSDSNKDGGYLASSWAVYRAELALVEVARKTGIRLRLFHGRGGTVGRGGGPSYEAILAQPPGAVNGSLRLTEQGEVIAAKYAEPQVAQRNLESLVAATLESTLLDVEGLGDTAEPAYAVLDEVAVLAQRAYAELVHETPGFVDYFMASTPVSEIGSLNIGSRPTSRKPTESIADLRAIPWVLAWSQSRVMLPGWYGTGSAFEQWIAAGPQSRAERVDILHDLYRRWPFFRSVLSNLAQVLAKSDLGLAAQYAELVDDAALRRRVFGKIADEHRRTIAMHKLITGQDNLLADNPALARSVFNRFPYLEPLNHLQVELLRRYRSGDDDELVQRGILLTMNGLTSALRNSG</sequence>